<sequence length="377" mass="41368">MPDTPTLTLAKDLLSRQSVTPEDAGCQELMIKRLKALGFTIEIMVFEDTTNFWARRGTEAPLFTFAGHTDVVPTGSLTQWNTDPFEPTIIDGMLYARGAADMKGSLACMIVAVERFISEHPEHKGSLSFLITSDEEGPFINGTTRVVDTLKERNEIIDMCIVGEPSSTQYVGDVVKNGRRGSLTGNLTVKGIQGHVAYPHIARNPIHQSMAALLELTMTEWDLGNAYFPPTSFQIPNMNSGTGASNVIPGTAEIMFNFRFSTESTVEGLQQRVIELLDKHNLEYDLDWIINGLPFLTDTGDLLTAVVDAVATVNQQKPELLTTGGTSDGRFIAQMGSQVIELGPVNATIHKVNECVKVDDLEKLTDMYQEVLNNLLA</sequence>
<organism>
    <name type="scientific">Aliivibrio salmonicida (strain LFI1238)</name>
    <name type="common">Vibrio salmonicida (strain LFI1238)</name>
    <dbReference type="NCBI Taxonomy" id="316275"/>
    <lineage>
        <taxon>Bacteria</taxon>
        <taxon>Pseudomonadati</taxon>
        <taxon>Pseudomonadota</taxon>
        <taxon>Gammaproteobacteria</taxon>
        <taxon>Vibrionales</taxon>
        <taxon>Vibrionaceae</taxon>
        <taxon>Aliivibrio</taxon>
    </lineage>
</organism>
<accession>B6EJS8</accession>
<comment type="function">
    <text evidence="1">Catalyzes the hydrolysis of N-succinyl-L,L-diaminopimelic acid (SDAP), forming succinate and LL-2,6-diaminopimelate (DAP), an intermediate involved in the bacterial biosynthesis of lysine and meso-diaminopimelic acid, an essential component of bacterial cell walls.</text>
</comment>
<comment type="catalytic activity">
    <reaction evidence="1">
        <text>N-succinyl-(2S,6S)-2,6-diaminopimelate + H2O = (2S,6S)-2,6-diaminopimelate + succinate</text>
        <dbReference type="Rhea" id="RHEA:22608"/>
        <dbReference type="ChEBI" id="CHEBI:15377"/>
        <dbReference type="ChEBI" id="CHEBI:30031"/>
        <dbReference type="ChEBI" id="CHEBI:57609"/>
        <dbReference type="ChEBI" id="CHEBI:58087"/>
        <dbReference type="EC" id="3.5.1.18"/>
    </reaction>
</comment>
<comment type="cofactor">
    <cofactor evidence="1">
        <name>Zn(2+)</name>
        <dbReference type="ChEBI" id="CHEBI:29105"/>
    </cofactor>
    <cofactor evidence="1">
        <name>Co(2+)</name>
        <dbReference type="ChEBI" id="CHEBI:48828"/>
    </cofactor>
    <text evidence="1">Binds 2 Zn(2+) or Co(2+) ions per subunit.</text>
</comment>
<comment type="pathway">
    <text evidence="1">Amino-acid biosynthesis; L-lysine biosynthesis via DAP pathway; LL-2,6-diaminopimelate from (S)-tetrahydrodipicolinate (succinylase route): step 3/3.</text>
</comment>
<comment type="subunit">
    <text evidence="1">Homodimer.</text>
</comment>
<comment type="similarity">
    <text evidence="1">Belongs to the peptidase M20A family. DapE subfamily.</text>
</comment>
<dbReference type="EC" id="3.5.1.18" evidence="1"/>
<dbReference type="EMBL" id="FM178379">
    <property type="protein sequence ID" value="CAQ80059.1"/>
    <property type="molecule type" value="Genomic_DNA"/>
</dbReference>
<dbReference type="RefSeq" id="WP_012550868.1">
    <property type="nucleotide sequence ID" value="NC_011312.1"/>
</dbReference>
<dbReference type="SMR" id="B6EJS8"/>
<dbReference type="KEGG" id="vsa:VSAL_I2375"/>
<dbReference type="eggNOG" id="COG0624">
    <property type="taxonomic scope" value="Bacteria"/>
</dbReference>
<dbReference type="HOGENOM" id="CLU_021802_4_0_6"/>
<dbReference type="UniPathway" id="UPA00034">
    <property type="reaction ID" value="UER00021"/>
</dbReference>
<dbReference type="Proteomes" id="UP000001730">
    <property type="component" value="Chromosome 1"/>
</dbReference>
<dbReference type="GO" id="GO:0008777">
    <property type="term" value="F:acetylornithine deacetylase activity"/>
    <property type="evidence" value="ECO:0007669"/>
    <property type="project" value="TreeGrafter"/>
</dbReference>
<dbReference type="GO" id="GO:0050897">
    <property type="term" value="F:cobalt ion binding"/>
    <property type="evidence" value="ECO:0007669"/>
    <property type="project" value="UniProtKB-UniRule"/>
</dbReference>
<dbReference type="GO" id="GO:0009014">
    <property type="term" value="F:succinyl-diaminopimelate desuccinylase activity"/>
    <property type="evidence" value="ECO:0007669"/>
    <property type="project" value="UniProtKB-UniRule"/>
</dbReference>
<dbReference type="GO" id="GO:0008270">
    <property type="term" value="F:zinc ion binding"/>
    <property type="evidence" value="ECO:0007669"/>
    <property type="project" value="UniProtKB-UniRule"/>
</dbReference>
<dbReference type="GO" id="GO:0019877">
    <property type="term" value="P:diaminopimelate biosynthetic process"/>
    <property type="evidence" value="ECO:0007669"/>
    <property type="project" value="UniProtKB-UniRule"/>
</dbReference>
<dbReference type="GO" id="GO:0006526">
    <property type="term" value="P:L-arginine biosynthetic process"/>
    <property type="evidence" value="ECO:0007669"/>
    <property type="project" value="TreeGrafter"/>
</dbReference>
<dbReference type="GO" id="GO:0009089">
    <property type="term" value="P:lysine biosynthetic process via diaminopimelate"/>
    <property type="evidence" value="ECO:0007669"/>
    <property type="project" value="UniProtKB-UniRule"/>
</dbReference>
<dbReference type="CDD" id="cd03891">
    <property type="entry name" value="M20_DapE_proteobac"/>
    <property type="match status" value="1"/>
</dbReference>
<dbReference type="FunFam" id="3.30.70.360:FF:000011">
    <property type="entry name" value="Succinyl-diaminopimelate desuccinylase"/>
    <property type="match status" value="1"/>
</dbReference>
<dbReference type="FunFam" id="3.40.630.10:FF:000005">
    <property type="entry name" value="Succinyl-diaminopimelate desuccinylase"/>
    <property type="match status" value="1"/>
</dbReference>
<dbReference type="FunFam" id="3.40.630.10:FF:000010">
    <property type="entry name" value="Succinyl-diaminopimelate desuccinylase"/>
    <property type="match status" value="1"/>
</dbReference>
<dbReference type="Gene3D" id="3.40.630.10">
    <property type="entry name" value="Zn peptidases"/>
    <property type="match status" value="2"/>
</dbReference>
<dbReference type="HAMAP" id="MF_01690">
    <property type="entry name" value="DapE"/>
    <property type="match status" value="1"/>
</dbReference>
<dbReference type="InterPro" id="IPR001261">
    <property type="entry name" value="ArgE/DapE_CS"/>
</dbReference>
<dbReference type="InterPro" id="IPR036264">
    <property type="entry name" value="Bact_exopeptidase_dim_dom"/>
</dbReference>
<dbReference type="InterPro" id="IPR005941">
    <property type="entry name" value="DapE_proteobac"/>
</dbReference>
<dbReference type="InterPro" id="IPR002933">
    <property type="entry name" value="Peptidase_M20"/>
</dbReference>
<dbReference type="InterPro" id="IPR011650">
    <property type="entry name" value="Peptidase_M20_dimer"/>
</dbReference>
<dbReference type="InterPro" id="IPR050072">
    <property type="entry name" value="Peptidase_M20A"/>
</dbReference>
<dbReference type="NCBIfam" id="TIGR01246">
    <property type="entry name" value="dapE_proteo"/>
    <property type="match status" value="1"/>
</dbReference>
<dbReference type="NCBIfam" id="NF009557">
    <property type="entry name" value="PRK13009.1"/>
    <property type="match status" value="1"/>
</dbReference>
<dbReference type="PANTHER" id="PTHR43808">
    <property type="entry name" value="ACETYLORNITHINE DEACETYLASE"/>
    <property type="match status" value="1"/>
</dbReference>
<dbReference type="PANTHER" id="PTHR43808:SF31">
    <property type="entry name" value="N-ACETYL-L-CITRULLINE DEACETYLASE"/>
    <property type="match status" value="1"/>
</dbReference>
<dbReference type="Pfam" id="PF07687">
    <property type="entry name" value="M20_dimer"/>
    <property type="match status" value="1"/>
</dbReference>
<dbReference type="Pfam" id="PF01546">
    <property type="entry name" value="Peptidase_M20"/>
    <property type="match status" value="1"/>
</dbReference>
<dbReference type="SUPFAM" id="SSF55031">
    <property type="entry name" value="Bacterial exopeptidase dimerisation domain"/>
    <property type="match status" value="1"/>
</dbReference>
<dbReference type="SUPFAM" id="SSF53187">
    <property type="entry name" value="Zn-dependent exopeptidases"/>
    <property type="match status" value="1"/>
</dbReference>
<dbReference type="PROSITE" id="PS00759">
    <property type="entry name" value="ARGE_DAPE_CPG2_2"/>
    <property type="match status" value="1"/>
</dbReference>
<reference key="1">
    <citation type="journal article" date="2008" name="BMC Genomics">
        <title>The genome sequence of the fish pathogen Aliivibrio salmonicida strain LFI1238 shows extensive evidence of gene decay.</title>
        <authorList>
            <person name="Hjerde E."/>
            <person name="Lorentzen M.S."/>
            <person name="Holden M.T."/>
            <person name="Seeger K."/>
            <person name="Paulsen S."/>
            <person name="Bason N."/>
            <person name="Churcher C."/>
            <person name="Harris D."/>
            <person name="Norbertczak H."/>
            <person name="Quail M.A."/>
            <person name="Sanders S."/>
            <person name="Thurston S."/>
            <person name="Parkhill J."/>
            <person name="Willassen N.P."/>
            <person name="Thomson N.R."/>
        </authorList>
    </citation>
    <scope>NUCLEOTIDE SEQUENCE [LARGE SCALE GENOMIC DNA]</scope>
    <source>
        <strain>LFI1238</strain>
    </source>
</reference>
<name>DAPE_ALISL</name>
<proteinExistence type="inferred from homology"/>
<feature type="chain" id="PRO_0000375459" description="Succinyl-diaminopimelate desuccinylase">
    <location>
        <begin position="1"/>
        <end position="377"/>
    </location>
</feature>
<feature type="active site" evidence="1">
    <location>
        <position position="70"/>
    </location>
</feature>
<feature type="active site" description="Proton acceptor" evidence="1">
    <location>
        <position position="135"/>
    </location>
</feature>
<feature type="binding site" evidence="1">
    <location>
        <position position="68"/>
    </location>
    <ligand>
        <name>Zn(2+)</name>
        <dbReference type="ChEBI" id="CHEBI:29105"/>
        <label>1</label>
    </ligand>
</feature>
<feature type="binding site" evidence="1">
    <location>
        <position position="101"/>
    </location>
    <ligand>
        <name>Zn(2+)</name>
        <dbReference type="ChEBI" id="CHEBI:29105"/>
        <label>1</label>
    </ligand>
</feature>
<feature type="binding site" evidence="1">
    <location>
        <position position="101"/>
    </location>
    <ligand>
        <name>Zn(2+)</name>
        <dbReference type="ChEBI" id="CHEBI:29105"/>
        <label>2</label>
    </ligand>
</feature>
<feature type="binding site" evidence="1">
    <location>
        <position position="136"/>
    </location>
    <ligand>
        <name>Zn(2+)</name>
        <dbReference type="ChEBI" id="CHEBI:29105"/>
        <label>2</label>
    </ligand>
</feature>
<feature type="binding site" evidence="1">
    <location>
        <position position="164"/>
    </location>
    <ligand>
        <name>Zn(2+)</name>
        <dbReference type="ChEBI" id="CHEBI:29105"/>
        <label>1</label>
    </ligand>
</feature>
<feature type="binding site" evidence="1">
    <location>
        <position position="350"/>
    </location>
    <ligand>
        <name>Zn(2+)</name>
        <dbReference type="ChEBI" id="CHEBI:29105"/>
        <label>2</label>
    </ligand>
</feature>
<gene>
    <name evidence="1" type="primary">dapE</name>
    <name type="ordered locus">VSAL_I2375</name>
</gene>
<evidence type="ECO:0000255" key="1">
    <source>
        <dbReference type="HAMAP-Rule" id="MF_01690"/>
    </source>
</evidence>
<protein>
    <recommendedName>
        <fullName evidence="1">Succinyl-diaminopimelate desuccinylase</fullName>
        <shortName evidence="1">SDAP desuccinylase</shortName>
        <ecNumber evidence="1">3.5.1.18</ecNumber>
    </recommendedName>
    <alternativeName>
        <fullName evidence="1">N-succinyl-LL-2,6-diaminoheptanedioate amidohydrolase</fullName>
    </alternativeName>
</protein>
<keyword id="KW-0028">Amino-acid biosynthesis</keyword>
<keyword id="KW-0170">Cobalt</keyword>
<keyword id="KW-0220">Diaminopimelate biosynthesis</keyword>
<keyword id="KW-0378">Hydrolase</keyword>
<keyword id="KW-0457">Lysine biosynthesis</keyword>
<keyword id="KW-0479">Metal-binding</keyword>
<keyword id="KW-0862">Zinc</keyword>